<evidence type="ECO:0000250" key="1">
    <source>
        <dbReference type="UniProtKB" id="A0A0A1HA03"/>
    </source>
</evidence>
<evidence type="ECO:0000250" key="2">
    <source>
        <dbReference type="UniProtKB" id="P51094"/>
    </source>
</evidence>
<evidence type="ECO:0000269" key="3">
    <source>
    </source>
</evidence>
<evidence type="ECO:0000305" key="4"/>
<dbReference type="EC" id="2.4.1.297"/>
<dbReference type="EMBL" id="AB192314">
    <property type="protein sequence ID" value="BAD95881.1"/>
    <property type="molecule type" value="mRNA"/>
</dbReference>
<dbReference type="EMBL" id="AB192316">
    <property type="protein sequence ID" value="BAD95883.1"/>
    <property type="molecule type" value="Genomic_DNA"/>
</dbReference>
<dbReference type="EMBL" id="AB192317">
    <property type="protein sequence ID" value="BAD95884.1"/>
    <property type="molecule type" value="Genomic_DNA"/>
</dbReference>
<dbReference type="EMBL" id="AB192318">
    <property type="protein sequence ID" value="BAD95885.1"/>
    <property type="molecule type" value="Genomic_DNA"/>
</dbReference>
<dbReference type="SMR" id="Q53UH4"/>
<dbReference type="CAZy" id="GT1">
    <property type="family name" value="Glycosyltransferase Family 1"/>
</dbReference>
<dbReference type="GeneID" id="109188143"/>
<dbReference type="KEGG" id="ag:BAD95881"/>
<dbReference type="KEGG" id="ini:109188143"/>
<dbReference type="OrthoDB" id="5835829at2759"/>
<dbReference type="UniPathway" id="UPA00009"/>
<dbReference type="GO" id="GO:0102455">
    <property type="term" value="F:anthocyanidin 3-O-glucoside 2''-O-glucosyltransferase activity"/>
    <property type="evidence" value="ECO:0007669"/>
    <property type="project" value="UniProtKB-EC"/>
</dbReference>
<dbReference type="GO" id="GO:0016758">
    <property type="term" value="F:hexosyltransferase activity"/>
    <property type="evidence" value="ECO:0000314"/>
    <property type="project" value="UniProtKB"/>
</dbReference>
<dbReference type="GO" id="GO:0035251">
    <property type="term" value="F:UDP-glucosyltransferase activity"/>
    <property type="evidence" value="ECO:0007669"/>
    <property type="project" value="InterPro"/>
</dbReference>
<dbReference type="GO" id="GO:0009718">
    <property type="term" value="P:anthocyanin-containing compound biosynthetic process"/>
    <property type="evidence" value="ECO:0000314"/>
    <property type="project" value="UniProtKB"/>
</dbReference>
<dbReference type="GO" id="GO:0043473">
    <property type="term" value="P:pigmentation"/>
    <property type="evidence" value="ECO:0000314"/>
    <property type="project" value="UniProtKB"/>
</dbReference>
<dbReference type="CDD" id="cd03784">
    <property type="entry name" value="GT1_Gtf-like"/>
    <property type="match status" value="1"/>
</dbReference>
<dbReference type="FunFam" id="3.40.50.2000:FF:000037">
    <property type="entry name" value="Glycosyltransferase"/>
    <property type="match status" value="1"/>
</dbReference>
<dbReference type="FunFam" id="3.40.50.2000:FF:000087">
    <property type="entry name" value="Glycosyltransferase"/>
    <property type="match status" value="1"/>
</dbReference>
<dbReference type="Gene3D" id="3.40.50.2000">
    <property type="entry name" value="Glycogen Phosphorylase B"/>
    <property type="match status" value="2"/>
</dbReference>
<dbReference type="InterPro" id="IPR050481">
    <property type="entry name" value="UDP-glycosyltransf_plant"/>
</dbReference>
<dbReference type="InterPro" id="IPR002213">
    <property type="entry name" value="UDP_glucos_trans"/>
</dbReference>
<dbReference type="PANTHER" id="PTHR48049">
    <property type="entry name" value="GLYCOSYLTRANSFERASE"/>
    <property type="match status" value="1"/>
</dbReference>
<dbReference type="PANTHER" id="PTHR48049:SF34">
    <property type="entry name" value="UDP-GLYCOSYLTRANSFERASE 79B30-LIKE"/>
    <property type="match status" value="1"/>
</dbReference>
<dbReference type="Pfam" id="PF00201">
    <property type="entry name" value="UDPGT"/>
    <property type="match status" value="1"/>
</dbReference>
<dbReference type="SUPFAM" id="SSF53756">
    <property type="entry name" value="UDP-Glycosyltransferase/glycogen phosphorylase"/>
    <property type="match status" value="1"/>
</dbReference>
<reference key="1">
    <citation type="journal article" date="2005" name="Plant J.">
        <title>Japanese morning glory dusky mutants displaying reddish-brown or purplish-gray flowers are deficient in a novel glycosylation enzyme for anthocyanin biosynthesis, UDP-glucose:anthocyanidin 3-O-glucoside-2''-O-glucosyltransferase, due to 4-bp insertions in the gene.</title>
        <authorList>
            <person name="Morita Y."/>
            <person name="Hoshino A."/>
            <person name="Kikuchi Y."/>
            <person name="Okuhara H."/>
            <person name="Ono E."/>
            <person name="Tanaka Y."/>
            <person name="Fukui Y."/>
            <person name="Saito N."/>
            <person name="Nitasaka E."/>
            <person name="Noguchi H."/>
            <person name="Iida S."/>
        </authorList>
    </citation>
    <scope>NUCLEOTIDE SEQUENCE [GENOMIC DNA / MRNA]</scope>
    <scope>FUNCTION</scope>
    <scope>CATALYTIC ACTIVITY</scope>
    <scope>PATHWAY</scope>
    <scope>MUTAGENESIS OF 444-SER--GLY-459</scope>
    <source>
        <strain>KK/ZSK-2</strain>
    </source>
</reference>
<comment type="function">
    <text evidence="3">Glycosyltransferase that mediates the glucosylation of anthocyanidin 3-O-glucosides to yield anthocyanidin 3-O-sophorosides. 3-O-sophoroside derivatives are required for the bright blue or red color of flowers.</text>
</comment>
<comment type="catalytic activity">
    <reaction evidence="3">
        <text>an anthocyanidin 3-O-beta-D-glucoside + UDP-alpha-D-glucose = an anthocyanidin 3-O-sophoroside + UDP + 2 H(+)</text>
        <dbReference type="Rhea" id="RHEA:35419"/>
        <dbReference type="ChEBI" id="CHEBI:15378"/>
        <dbReference type="ChEBI" id="CHEBI:16307"/>
        <dbReference type="ChEBI" id="CHEBI:58223"/>
        <dbReference type="ChEBI" id="CHEBI:58885"/>
        <dbReference type="ChEBI" id="CHEBI:77946"/>
        <dbReference type="EC" id="2.4.1.297"/>
    </reaction>
</comment>
<comment type="pathway">
    <text evidence="3">Pigment biosynthesis; anthocyanin biosynthesis.</text>
</comment>
<comment type="tissue specificity">
    <text>Mainly expressed in the petals and tubes of flower buds at around 24 hours before flower opening.</text>
</comment>
<comment type="similarity">
    <text evidence="4">Belongs to the UDP-glycosyltransferase family.</text>
</comment>
<name>DUSKY_IPONI</name>
<organism>
    <name type="scientific">Ipomoea nil</name>
    <name type="common">Japanese morning glory</name>
    <name type="synonym">Pharbitis nil</name>
    <dbReference type="NCBI Taxonomy" id="35883"/>
    <lineage>
        <taxon>Eukaryota</taxon>
        <taxon>Viridiplantae</taxon>
        <taxon>Streptophyta</taxon>
        <taxon>Embryophyta</taxon>
        <taxon>Tracheophyta</taxon>
        <taxon>Spermatophyta</taxon>
        <taxon>Magnoliopsida</taxon>
        <taxon>eudicotyledons</taxon>
        <taxon>Gunneridae</taxon>
        <taxon>Pentapetalae</taxon>
        <taxon>asterids</taxon>
        <taxon>lamiids</taxon>
        <taxon>Solanales</taxon>
        <taxon>Convolvulaceae</taxon>
        <taxon>Ipomoeeae</taxon>
        <taxon>Ipomoea</taxon>
    </lineage>
</organism>
<feature type="chain" id="PRO_0000422561" description="Anthocyanidin 3-O-glucoside 2''-O-glucosyltransferase">
    <location>
        <begin position="1"/>
        <end position="459"/>
    </location>
</feature>
<feature type="active site" description="Proton acceptor" evidence="1">
    <location>
        <position position="20"/>
    </location>
</feature>
<feature type="active site" description="Charge relay" evidence="1">
    <location>
        <position position="117"/>
    </location>
</feature>
<feature type="binding site" evidence="2">
    <location>
        <position position="20"/>
    </location>
    <ligand>
        <name>an anthocyanidin</name>
        <dbReference type="ChEBI" id="CHEBI:143576"/>
    </ligand>
</feature>
<feature type="binding site" evidence="1">
    <location>
        <position position="138"/>
    </location>
    <ligand>
        <name>UDP-alpha-D-glucose</name>
        <dbReference type="ChEBI" id="CHEBI:58885"/>
    </ligand>
</feature>
<feature type="binding site" evidence="1">
    <location>
        <position position="335"/>
    </location>
    <ligand>
        <name>UDP-alpha-D-glucose</name>
        <dbReference type="ChEBI" id="CHEBI:58885"/>
    </ligand>
</feature>
<feature type="binding site" evidence="1">
    <location>
        <position position="337"/>
    </location>
    <ligand>
        <name>UDP-alpha-D-glucose</name>
        <dbReference type="ChEBI" id="CHEBI:58885"/>
    </ligand>
</feature>
<feature type="binding site" evidence="1">
    <location>
        <position position="352"/>
    </location>
    <ligand>
        <name>UDP-alpha-D-glucose</name>
        <dbReference type="ChEBI" id="CHEBI:58885"/>
    </ligand>
</feature>
<feature type="binding site" evidence="1">
    <location>
        <position position="355"/>
    </location>
    <ligand>
        <name>UDP-alpha-D-glucose</name>
        <dbReference type="ChEBI" id="CHEBI:58885"/>
    </ligand>
</feature>
<feature type="binding site" evidence="1">
    <location>
        <position position="357"/>
    </location>
    <ligand>
        <name>UDP-alpha-D-glucose</name>
        <dbReference type="ChEBI" id="CHEBI:58885"/>
    </ligand>
</feature>
<feature type="binding site" evidence="1">
    <location>
        <position position="360"/>
    </location>
    <ligand>
        <name>UDP-alpha-D-glucose</name>
        <dbReference type="ChEBI" id="CHEBI:58885"/>
    </ligand>
</feature>
<feature type="binding site" evidence="2">
    <location>
        <position position="375"/>
    </location>
    <ligand>
        <name>an anthocyanidin</name>
        <dbReference type="ChEBI" id="CHEBI:143576"/>
    </ligand>
</feature>
<feature type="binding site" evidence="1">
    <location>
        <position position="376"/>
    </location>
    <ligand>
        <name>UDP-alpha-D-glucose</name>
        <dbReference type="ChEBI" id="CHEBI:58885"/>
    </ligand>
</feature>
<feature type="binding site" evidence="1">
    <location>
        <position position="377"/>
    </location>
    <ligand>
        <name>UDP-alpha-D-glucose</name>
        <dbReference type="ChEBI" id="CHEBI:58885"/>
    </ligand>
</feature>
<feature type="mutagenesis site" description="In dy-1; reddish-brown or purplish-gray petals phenotype due to accumulation of anthocyanidin 3-O-glucoside derivatives." evidence="3">
    <original>SKYMDSFNQKLQDLLG</original>
    <variation>GFKVHGLFQSETAGSPWMNII</variation>
    <location>
        <begin position="444"/>
        <end position="459"/>
    </location>
</feature>
<feature type="mutagenesis site" description="In dy-2; reddish-brown or purplish-gray petals phenotype due to accumulation of anthocyanidin 3-O-glucoside derivatives." evidence="3">
    <original>SKYMDSFNQKLQDLLG</original>
    <variation>RFKVHGLFQSETAGSPWMNII</variation>
    <location>
        <begin position="444"/>
        <end position="459"/>
    </location>
</feature>
<protein>
    <recommendedName>
        <fullName>Anthocyanidin 3-O-glucoside 2''-O-glucosyltransferase</fullName>
        <ecNumber>2.4.1.297</ecNumber>
    </recommendedName>
    <alternativeName>
        <fullName>3-O-glucoside-2''-O-glucosyltransferase</fullName>
        <shortName>In3GGT</shortName>
    </alternativeName>
    <alternativeName>
        <fullName>Protein dusky</fullName>
        <shortName>Dy</shortName>
    </alternativeName>
</protein>
<accession>Q53UH4</accession>
<accession>Q53UH2</accession>
<accession>Q53UH3</accession>
<sequence>MGSQATTYHMAMYPWFGVGHLTGFFRLANKLAGKGHRISFLIPKNTQSKLESFNLHPHLISFVPIVVPSIPGLPPGAETTSDVPFPSTHLLMEAMDKTQNDIEIILKDLKVDVVFYDFTHWLPSLARKIGIKSVFYSTISPLMHGYALSPERRVVGKQLTEADMMKAPASFPDPSIKLHAHEARGFTARTVMKFGGDITFFDRIFTAVSESDGLAYSTCREIEGQFCDYIETQFQKPVLLAGPALPVPSKSTMEQKWSDWLGKFKEGSVIYCAFGSECTLRKDKFQELLWGLELTGMPFFAALKPPFEAESIEAAIPEELKEKIQGRGIVHGEWVQQQLFLQHPSVGCFVSHCGWASLSEALVNDCQIVLLPQVGDQIINARIMSVSLKVGVEVEKGEEDGVFSRESVCKAVKAVMDEKSEIGREVRGNHDKLRGFLLNADLDSKYMDSFNQKLQDLLG</sequence>
<gene>
    <name type="primary">3GGT</name>
</gene>
<keyword id="KW-0328">Glycosyltransferase</keyword>
<keyword id="KW-0808">Transferase</keyword>
<proteinExistence type="evidence at protein level"/>